<gene>
    <name type="primary">Uimc1</name>
    <name type="synonym">Rap80</name>
</gene>
<proteinExistence type="evidence at protein level"/>
<comment type="function">
    <text evidence="3">Ubiquitin-binding protein. Specifically recognizes and binds 'Lys-63'-linked ubiquitin. Plays a central role in the BRCA1-A complex by specifically binding 'Lys-63'-linked ubiquitinated histones H2A and H2AX at DNA lesions sites, leading to target the BRCA1-BARD1 heterodimer to sites of DNA damage at double-strand breaks (DSBs). The BRCA1-A complex also possesses deubiquitinase activity that specifically removes 'Lys-63'-linked ubiquitin on histones H2A and H2AX. Also weakly binds monoubiquitin but with much less affinity than 'Lys-63'-linked ubiquitin. May interact with monoubiquitinated histones H2A and H2B; the relevance of such results is however unclear in vivo. Does not bind Lys-48'-linked ubiquitin. May indirectly act as a transcriptional repressor by inhibiting the interaction of NR6A1 with the corepressor NCOR1.</text>
</comment>
<comment type="subunit">
    <text evidence="2 3">Component of the ARISC complex, at least composed of UIMC1/RAP80, ABRAXAS1, BRCC3/BRCC36, BABAM2 and BABAM1/NBA1. Component of the BRCA1-A complex, at least composed of the BRCA1, BARD1, UIMC1/RAP80, ABRAXAS1, BRCC3/BRCC36, BABAM2 and BABAM1/NBA1. In the BRCA1-A complex, interacts directly with ABRAXAS1. Interacts with UBE2I. Interacts with NR6A1. Interacts with ESR1 (By similarity). Interacts with TSP57 (By similarity). Interacts with TRAIP (By similarity).</text>
</comment>
<comment type="subcellular location">
    <subcellularLocation>
        <location evidence="3">Nucleus</location>
    </subcellularLocation>
    <text evidence="3">Localizes at sites of DNA damage at double-strand breaks (DSBs).</text>
</comment>
<comment type="domain">
    <text evidence="2 3">The tandem UIM domains form a continuous 60 Angstrom-long alpha-helix and mediate binding to 'Lys-63'-linked ubiquitins. UIM1 and UIM2 bind to the proximal and distal ubiquitin moieties and recognize an 'Ile-44'-centered hydrophobic patch. Since UIMs don't interact with the 'Lys-63' isopeptide bond the UIM-linker region between the 2 UIM domains determines the selectivity for 'Lys-63'-linkage, and its length is very important for specificity.</text>
</comment>
<comment type="domain">
    <text evidence="3">The Abraxas-interacting region (AIR) mediates the interaction with ABRAXAS1.</text>
</comment>
<comment type="PTM">
    <text evidence="3">Sumoylated.</text>
</comment>
<comment type="PTM">
    <text evidence="3">Phosphorylated upon DNA damage by ATM or ATR.</text>
</comment>
<comment type="similarity">
    <text evidence="7">Belongs to the RAP80 family.</text>
</comment>
<accession>Q5PQK4</accession>
<reference key="1">
    <citation type="submission" date="2005-07" db="EMBL/GenBank/DDBJ databases">
        <authorList>
            <person name="Mural R.J."/>
            <person name="Adams M.D."/>
            <person name="Myers E.W."/>
            <person name="Smith H.O."/>
            <person name="Venter J.C."/>
        </authorList>
    </citation>
    <scope>NUCLEOTIDE SEQUENCE [LARGE SCALE GENOMIC DNA]</scope>
    <source>
        <strain>Brown Norway</strain>
    </source>
</reference>
<reference key="2">
    <citation type="journal article" date="2004" name="Genome Res.">
        <title>The status, quality, and expansion of the NIH full-length cDNA project: the Mammalian Gene Collection (MGC).</title>
        <authorList>
            <consortium name="The MGC Project Team"/>
        </authorList>
    </citation>
    <scope>NUCLEOTIDE SEQUENCE [LARGE SCALE MRNA]</scope>
    <source>
        <tissue>Testis</tissue>
    </source>
</reference>
<reference key="3">
    <citation type="journal article" date="2012" name="Nat. Commun.">
        <title>Quantitative maps of protein phosphorylation sites across 14 different rat organs and tissues.</title>
        <authorList>
            <person name="Lundby A."/>
            <person name="Secher A."/>
            <person name="Lage K."/>
            <person name="Nordsborg N.B."/>
            <person name="Dmytriyev A."/>
            <person name="Lundby C."/>
            <person name="Olsen J.V."/>
        </authorList>
    </citation>
    <scope>PHOSPHORYLATION [LARGE SCALE ANALYSIS] AT SER-44; SER-46; SER-379; SER-664 AND SER-688</scope>
    <scope>IDENTIFICATION BY MASS SPECTROMETRY [LARGE SCALE ANALYSIS]</scope>
</reference>
<dbReference type="EMBL" id="CH474032">
    <property type="protein sequence ID" value="EDL94013.1"/>
    <property type="molecule type" value="Genomic_DNA"/>
</dbReference>
<dbReference type="EMBL" id="BC087149">
    <property type="protein sequence ID" value="AAH87149.1"/>
    <property type="molecule type" value="mRNA"/>
</dbReference>
<dbReference type="RefSeq" id="NP_001013906.1">
    <property type="nucleotide sequence ID" value="NM_001013884.1"/>
</dbReference>
<dbReference type="RefSeq" id="XP_017455963.1">
    <property type="nucleotide sequence ID" value="XM_017600474.1"/>
</dbReference>
<dbReference type="RefSeq" id="XP_038951399.1">
    <property type="nucleotide sequence ID" value="XM_039095471.2"/>
</dbReference>
<dbReference type="RefSeq" id="XP_038951400.1">
    <property type="nucleotide sequence ID" value="XM_039095472.2"/>
</dbReference>
<dbReference type="RefSeq" id="XP_063132215.1">
    <property type="nucleotide sequence ID" value="XM_063276145.1"/>
</dbReference>
<dbReference type="RefSeq" id="XP_063132216.1">
    <property type="nucleotide sequence ID" value="XM_063276146.1"/>
</dbReference>
<dbReference type="SMR" id="Q5PQK4"/>
<dbReference type="FunCoup" id="Q5PQK4">
    <property type="interactions" value="1731"/>
</dbReference>
<dbReference type="STRING" id="10116.ENSRNOP00000073299"/>
<dbReference type="iPTMnet" id="Q5PQK4"/>
<dbReference type="PhosphoSitePlus" id="Q5PQK4"/>
<dbReference type="PaxDb" id="10116-ENSRNOP00000022704"/>
<dbReference type="GeneID" id="290997"/>
<dbReference type="KEGG" id="rno:290997"/>
<dbReference type="UCSC" id="RGD:1307009">
    <property type="organism name" value="rat"/>
</dbReference>
<dbReference type="AGR" id="RGD:1307009"/>
<dbReference type="CTD" id="51720"/>
<dbReference type="RGD" id="1307009">
    <property type="gene designation" value="Uimc1"/>
</dbReference>
<dbReference type="VEuPathDB" id="HostDB:ENSRNOG00000016891"/>
<dbReference type="eggNOG" id="ENOG502QQGN">
    <property type="taxonomic scope" value="Eukaryota"/>
</dbReference>
<dbReference type="HOGENOM" id="CLU_023109_1_0_1"/>
<dbReference type="InParanoid" id="Q5PQK4"/>
<dbReference type="PhylomeDB" id="Q5PQK4"/>
<dbReference type="TreeFam" id="TF336575"/>
<dbReference type="Reactome" id="R-RNO-5689901">
    <property type="pathway name" value="Metalloprotease DUBs"/>
</dbReference>
<dbReference type="Reactome" id="R-RNO-5693565">
    <property type="pathway name" value="Recruitment and ATM-mediated phosphorylation of repair and signaling proteins at DNA double strand breaks"/>
</dbReference>
<dbReference type="Reactome" id="R-RNO-5693571">
    <property type="pathway name" value="Nonhomologous End-Joining (NHEJ)"/>
</dbReference>
<dbReference type="Reactome" id="R-RNO-5693607">
    <property type="pathway name" value="Processing of DNA double-strand break ends"/>
</dbReference>
<dbReference type="Reactome" id="R-RNO-69473">
    <property type="pathway name" value="G2/M DNA damage checkpoint"/>
</dbReference>
<dbReference type="PRO" id="PR:Q5PQK4"/>
<dbReference type="Proteomes" id="UP000002494">
    <property type="component" value="Chromosome 17"/>
</dbReference>
<dbReference type="Proteomes" id="UP000234681">
    <property type="component" value="Chromosome 17"/>
</dbReference>
<dbReference type="Bgee" id="ENSRNOG00000016891">
    <property type="expression patterns" value="Expressed in ovary and 20 other cell types or tissues"/>
</dbReference>
<dbReference type="ExpressionAtlas" id="Q5PQK4">
    <property type="expression patterns" value="baseline and differential"/>
</dbReference>
<dbReference type="GO" id="GO:0070531">
    <property type="term" value="C:BRCA1-A complex"/>
    <property type="evidence" value="ECO:0000250"/>
    <property type="project" value="UniProtKB"/>
</dbReference>
<dbReference type="GO" id="GO:0005634">
    <property type="term" value="C:nucleus"/>
    <property type="evidence" value="ECO:0000250"/>
    <property type="project" value="UniProtKB"/>
</dbReference>
<dbReference type="GO" id="GO:0035861">
    <property type="term" value="C:site of double-strand break"/>
    <property type="evidence" value="ECO:0000266"/>
    <property type="project" value="RGD"/>
</dbReference>
<dbReference type="GO" id="GO:0003677">
    <property type="term" value="F:DNA binding"/>
    <property type="evidence" value="ECO:0007669"/>
    <property type="project" value="InterPro"/>
</dbReference>
<dbReference type="GO" id="GO:0042393">
    <property type="term" value="F:histone binding"/>
    <property type="evidence" value="ECO:0000250"/>
    <property type="project" value="UniProtKB"/>
</dbReference>
<dbReference type="GO" id="GO:0070530">
    <property type="term" value="F:K63-linked polyubiquitin modification-dependent protein binding"/>
    <property type="evidence" value="ECO:0000250"/>
    <property type="project" value="UniProtKB"/>
</dbReference>
<dbReference type="GO" id="GO:0046965">
    <property type="term" value="F:nuclear retinoid X receptor binding"/>
    <property type="evidence" value="ECO:0000266"/>
    <property type="project" value="RGD"/>
</dbReference>
<dbReference type="GO" id="GO:0061649">
    <property type="term" value="F:ubiquitin-modified histone reader activity"/>
    <property type="evidence" value="ECO:0000266"/>
    <property type="project" value="RGD"/>
</dbReference>
<dbReference type="GO" id="GO:0008270">
    <property type="term" value="F:zinc ion binding"/>
    <property type="evidence" value="ECO:0007669"/>
    <property type="project" value="UniProtKB-KW"/>
</dbReference>
<dbReference type="GO" id="GO:0140861">
    <property type="term" value="P:DNA repair-dependent chromatin remodeling"/>
    <property type="evidence" value="ECO:0000266"/>
    <property type="project" value="RGD"/>
</dbReference>
<dbReference type="GO" id="GO:0006302">
    <property type="term" value="P:double-strand break repair"/>
    <property type="evidence" value="ECO:0000250"/>
    <property type="project" value="UniProtKB"/>
</dbReference>
<dbReference type="GO" id="GO:0007095">
    <property type="term" value="P:mitotic G2 DNA damage checkpoint signaling"/>
    <property type="evidence" value="ECO:0000250"/>
    <property type="project" value="UniProtKB"/>
</dbReference>
<dbReference type="GO" id="GO:0045892">
    <property type="term" value="P:negative regulation of DNA-templated transcription"/>
    <property type="evidence" value="ECO:0000266"/>
    <property type="project" value="RGD"/>
</dbReference>
<dbReference type="GO" id="GO:0045739">
    <property type="term" value="P:positive regulation of DNA repair"/>
    <property type="evidence" value="ECO:0000250"/>
    <property type="project" value="UniProtKB"/>
</dbReference>
<dbReference type="GO" id="GO:0010212">
    <property type="term" value="P:response to ionizing radiation"/>
    <property type="evidence" value="ECO:0000250"/>
    <property type="project" value="UniProtKB"/>
</dbReference>
<dbReference type="CDD" id="cd20912">
    <property type="entry name" value="AIR_RAP80-like"/>
    <property type="match status" value="1"/>
</dbReference>
<dbReference type="Gene3D" id="6.10.250.1800">
    <property type="match status" value="1"/>
</dbReference>
<dbReference type="InterPro" id="IPR006642">
    <property type="entry name" value="Rad18_UBZ4"/>
</dbReference>
<dbReference type="InterPro" id="IPR038868">
    <property type="entry name" value="RAP80"/>
</dbReference>
<dbReference type="InterPro" id="IPR040714">
    <property type="entry name" value="RAP80_UIM"/>
</dbReference>
<dbReference type="InterPro" id="IPR003903">
    <property type="entry name" value="UIM_dom"/>
</dbReference>
<dbReference type="PANTHER" id="PTHR15932:SF2">
    <property type="entry name" value="BRCA1-A COMPLEX SUBUNIT RAP80"/>
    <property type="match status" value="1"/>
</dbReference>
<dbReference type="PANTHER" id="PTHR15932">
    <property type="entry name" value="UBIQUITIN INTERACTION MOTIF-CONTAINING PROTEIN 1"/>
    <property type="match status" value="1"/>
</dbReference>
<dbReference type="Pfam" id="PF18282">
    <property type="entry name" value="RAP80_UIM"/>
    <property type="match status" value="1"/>
</dbReference>
<dbReference type="SMART" id="SM00726">
    <property type="entry name" value="UIM"/>
    <property type="match status" value="2"/>
</dbReference>
<dbReference type="PROSITE" id="PS50330">
    <property type="entry name" value="UIM"/>
    <property type="match status" value="1"/>
</dbReference>
<dbReference type="PROSITE" id="PS51908">
    <property type="entry name" value="ZF_UBZ4"/>
    <property type="match status" value="1"/>
</dbReference>
<name>UIMC1_RAT</name>
<evidence type="ECO:0000250" key="1"/>
<evidence type="ECO:0000250" key="2">
    <source>
        <dbReference type="UniProtKB" id="Q5U5Q9"/>
    </source>
</evidence>
<evidence type="ECO:0000250" key="3">
    <source>
        <dbReference type="UniProtKB" id="Q96RL1"/>
    </source>
</evidence>
<evidence type="ECO:0000255" key="4">
    <source>
        <dbReference type="PROSITE-ProRule" id="PRU00213"/>
    </source>
</evidence>
<evidence type="ECO:0000255" key="5">
    <source>
        <dbReference type="PROSITE-ProRule" id="PRU01256"/>
    </source>
</evidence>
<evidence type="ECO:0000256" key="6">
    <source>
        <dbReference type="SAM" id="MobiDB-lite"/>
    </source>
</evidence>
<evidence type="ECO:0000305" key="7"/>
<evidence type="ECO:0007744" key="8">
    <source>
    </source>
</evidence>
<sequence>MPRRKKKIKEASEGQNLEKKDLETTSSVSIKKKRRLEDLFIVISDSDGEETKEENGLQKMKTKQSNRSKCLAKRKIAQMSEEEQFALALKMSEQEAKEVNNQEEKEEELLRKAIAESLNSRWSSDASAARPRPLSTGPSSHPHQDSTKDSGTTEGIWQLAPPSLCKGSQISQGNEAEEGKEPWDHSENPEEEPLSGSSGSQDQSSRPVFENEKVKCFDRCTGHLAEHTQCGKPQESTGSGCAFPKAVQGRGDTSRQCLPTPADTKGLQDIGGTVHYYWGVPFCPAGVDPDQYTSVILCQLEVYQKSLKMAQRQLVKKRGFGEPVLPRPPFLIQNECGQEEQTSEKHEGLSEDVRAGAREERQGSGASVWHSETKDSQKSPITSLKQRLLLEEEPTTGRGQSSQGLFVEETSEEVLKSSEGDDAVPASQSIAVLTSKRDLVLMPEASTEEVTVCPETQLSSFEPLDLNGEDSVDGREIPTELGMTVSNRQVDNREAGKDSRPPAVSASARVSCPLCNQDFPPTKIEQHAMYCTGLMEPETVLTRRRREAKKKSDGRTAAQPALDISRKEKCYLCKSLVPLGEYQCHVETCLQLANVDRENGTEGMRRPRVCAPVEGKPKQRLRKSKEKGHSQGRLLSLLEQSEHRTTGVERTPKCSEAGAFRMPSPDVEEAGCSRERQSSLSKLNLNESPIKSFVPVSEATNCLVDFKGQFAFRSQTKSGRGRRRKS</sequence>
<keyword id="KW-0156">Chromatin regulator</keyword>
<keyword id="KW-0227">DNA damage</keyword>
<keyword id="KW-0234">DNA repair</keyword>
<keyword id="KW-1017">Isopeptide bond</keyword>
<keyword id="KW-0479">Metal-binding</keyword>
<keyword id="KW-0539">Nucleus</keyword>
<keyword id="KW-0597">Phosphoprotein</keyword>
<keyword id="KW-1185">Reference proteome</keyword>
<keyword id="KW-0677">Repeat</keyword>
<keyword id="KW-0804">Transcription</keyword>
<keyword id="KW-0805">Transcription regulation</keyword>
<keyword id="KW-0832">Ubl conjugation</keyword>
<keyword id="KW-0862">Zinc</keyword>
<keyword id="KW-0863">Zinc-finger</keyword>
<protein>
    <recommendedName>
        <fullName>BRCA1-A complex subunit RAP80</fullName>
    </recommendedName>
    <alternativeName>
        <fullName>Receptor-associated protein 80</fullName>
    </alternativeName>
    <alternativeName>
        <fullName>Ubiquitin interaction motif-containing protein 1</fullName>
    </alternativeName>
</protein>
<feature type="chain" id="PRO_0000373952" description="BRCA1-A complex subunit RAP80">
    <location>
        <begin position="1"/>
        <end position="726"/>
    </location>
</feature>
<feature type="domain" description="UIM 1" evidence="4">
    <location>
        <begin position="80"/>
        <end position="99"/>
    </location>
</feature>
<feature type="domain" description="UIM 2" evidence="4">
    <location>
        <begin position="104"/>
        <end position="124"/>
    </location>
</feature>
<feature type="zinc finger region" description="UBZ4-type" evidence="5">
    <location>
        <begin position="509"/>
        <end position="536"/>
    </location>
</feature>
<feature type="region of interest" description="Necessary for transcriptional repression" evidence="1">
    <location>
        <begin position="1"/>
        <end position="101"/>
    </location>
</feature>
<feature type="region of interest" description="Disordered" evidence="6">
    <location>
        <begin position="1"/>
        <end position="27"/>
    </location>
</feature>
<feature type="region of interest" description="Disordered" evidence="6">
    <location>
        <begin position="47"/>
        <end position="67"/>
    </location>
</feature>
<feature type="region of interest" description="Disordered" evidence="6">
    <location>
        <begin position="93"/>
        <end position="112"/>
    </location>
</feature>
<feature type="region of interest" description="UIM-linker">
    <location>
        <begin position="97"/>
        <end position="103"/>
    </location>
</feature>
<feature type="region of interest" description="Necessary for interaction with NR6A1 N-terminus" evidence="1">
    <location>
        <begin position="100"/>
        <end position="200"/>
    </location>
</feature>
<feature type="region of interest" description="Disordered" evidence="6">
    <location>
        <begin position="119"/>
        <end position="208"/>
    </location>
</feature>
<feature type="region of interest" description="AIR">
    <location>
        <begin position="270"/>
        <end position="400"/>
    </location>
</feature>
<feature type="region of interest" description="Disordered" evidence="6">
    <location>
        <begin position="356"/>
        <end position="411"/>
    </location>
</feature>
<feature type="region of interest" description="Necessary for interaction with NR6A1 C-terminus" evidence="1">
    <location>
        <begin position="400"/>
        <end position="507"/>
    </location>
</feature>
<feature type="region of interest" description="Zinc-finger-like region">
    <location>
        <begin position="512"/>
        <end position="589"/>
    </location>
</feature>
<feature type="region of interest" description="Disordered" evidence="6">
    <location>
        <begin position="611"/>
        <end position="675"/>
    </location>
</feature>
<feature type="short sequence motif" description="LR motif">
    <location>
        <begin position="60"/>
        <end position="78"/>
    </location>
</feature>
<feature type="compositionally biased region" description="Basic and acidic residues" evidence="6">
    <location>
        <begin position="9"/>
        <end position="23"/>
    </location>
</feature>
<feature type="compositionally biased region" description="Basic and acidic residues" evidence="6">
    <location>
        <begin position="177"/>
        <end position="188"/>
    </location>
</feature>
<feature type="compositionally biased region" description="Low complexity" evidence="6">
    <location>
        <begin position="194"/>
        <end position="205"/>
    </location>
</feature>
<feature type="compositionally biased region" description="Basic and acidic residues" evidence="6">
    <location>
        <begin position="640"/>
        <end position="653"/>
    </location>
</feature>
<feature type="binding site" evidence="5">
    <location>
        <position position="512"/>
    </location>
    <ligand>
        <name>Zn(2+)</name>
        <dbReference type="ChEBI" id="CHEBI:29105"/>
    </ligand>
</feature>
<feature type="binding site" evidence="5">
    <location>
        <position position="515"/>
    </location>
    <ligand>
        <name>Zn(2+)</name>
        <dbReference type="ChEBI" id="CHEBI:29105"/>
    </ligand>
</feature>
<feature type="binding site" evidence="5">
    <location>
        <position position="527"/>
    </location>
    <ligand>
        <name>Zn(2+)</name>
        <dbReference type="ChEBI" id="CHEBI:29105"/>
    </ligand>
</feature>
<feature type="binding site" evidence="5">
    <location>
        <position position="531"/>
    </location>
    <ligand>
        <name>Zn(2+)</name>
        <dbReference type="ChEBI" id="CHEBI:29105"/>
    </ligand>
</feature>
<feature type="modified residue" description="Phosphoserine" evidence="3">
    <location>
        <position position="29"/>
    </location>
</feature>
<feature type="modified residue" description="Phosphoserine" evidence="8">
    <location>
        <position position="44"/>
    </location>
</feature>
<feature type="modified residue" description="Phosphoserine" evidence="8">
    <location>
        <position position="46"/>
    </location>
</feature>
<feature type="modified residue" description="Phosphothreonine" evidence="2">
    <location>
        <position position="51"/>
    </location>
</feature>
<feature type="modified residue" description="Phosphoserine" evidence="3">
    <location>
        <position position="140"/>
    </location>
</feature>
<feature type="modified residue" description="Phosphoserine" evidence="3">
    <location>
        <position position="205"/>
    </location>
</feature>
<feature type="modified residue" description="Phosphoserine" evidence="8">
    <location>
        <position position="379"/>
    </location>
</feature>
<feature type="modified residue" description="Phosphoserine" evidence="3">
    <location>
        <position position="402"/>
    </location>
</feature>
<feature type="modified residue" description="Phosphoserine" evidence="3">
    <location>
        <position position="427"/>
    </location>
</feature>
<feature type="modified residue" description="Phosphoserine" evidence="3">
    <location>
        <position position="636"/>
    </location>
</feature>
<feature type="modified residue" description="Phosphoserine" evidence="8">
    <location>
        <position position="664"/>
    </location>
</feature>
<feature type="modified residue" description="Phosphoserine" evidence="8">
    <location>
        <position position="688"/>
    </location>
</feature>
<feature type="cross-link" description="Glycyl lysine isopeptide (Lys-Gly) (interchain with G-Cter in SUMO2)" evidence="3">
    <location>
        <position position="20"/>
    </location>
</feature>
<feature type="cross-link" description="Glycyl lysine isopeptide (Lys-Gly) (interchain with G-Cter in SUMO2)" evidence="3">
    <location>
        <position position="31"/>
    </location>
</feature>
<feature type="cross-link" description="Glycyl lysine isopeptide (Lys-Gly) (interchain with G-Cter in SUMO2)" evidence="3">
    <location>
        <position position="75"/>
    </location>
</feature>
<feature type="cross-link" description="Glycyl lysine isopeptide (Lys-Gly) (interchain with G-Cter in SUMO2)" evidence="3">
    <location>
        <position position="90"/>
    </location>
</feature>
<feature type="cross-link" description="Glycyl lysine isopeptide (Lys-Gly) (interchain with G-Cter in SUMO2)" evidence="3">
    <location>
        <position position="245"/>
    </location>
</feature>
<feature type="cross-link" description="Glycyl lysine isopeptide (Lys-Gly) (interchain with G-Cter in SUMO2)" evidence="3">
    <location>
        <position position="436"/>
    </location>
</feature>
<feature type="cross-link" description="Glycyl lysine isopeptide (Lys-Gly) (interchain with G-Cter in SUMO2)" evidence="3">
    <location>
        <position position="551"/>
    </location>
</feature>
<feature type="cross-link" description="Glycyl lysine isopeptide (Lys-Gly) (interchain with G-Cter in SUMO2)" evidence="3">
    <location>
        <position position="569"/>
    </location>
</feature>
<feature type="cross-link" description="Glycyl lysine isopeptide (Lys-Gly) (interchain with G-Cter in SUMO2)" evidence="3">
    <location>
        <position position="616"/>
    </location>
</feature>
<feature type="cross-link" description="Glycyl lysine isopeptide (Lys-Gly) (interchain with G-Cter in SUMO2)" evidence="3">
    <location>
        <position position="707"/>
    </location>
</feature>
<organism>
    <name type="scientific">Rattus norvegicus</name>
    <name type="common">Rat</name>
    <dbReference type="NCBI Taxonomy" id="10116"/>
    <lineage>
        <taxon>Eukaryota</taxon>
        <taxon>Metazoa</taxon>
        <taxon>Chordata</taxon>
        <taxon>Craniata</taxon>
        <taxon>Vertebrata</taxon>
        <taxon>Euteleostomi</taxon>
        <taxon>Mammalia</taxon>
        <taxon>Eutheria</taxon>
        <taxon>Euarchontoglires</taxon>
        <taxon>Glires</taxon>
        <taxon>Rodentia</taxon>
        <taxon>Myomorpha</taxon>
        <taxon>Muroidea</taxon>
        <taxon>Muridae</taxon>
        <taxon>Murinae</taxon>
        <taxon>Rattus</taxon>
    </lineage>
</organism>